<name>TPIS_ECOUT</name>
<protein>
    <recommendedName>
        <fullName evidence="1">Triosephosphate isomerase</fullName>
        <shortName evidence="1">TIM</shortName>
        <shortName evidence="1">TPI</shortName>
        <ecNumber evidence="1">5.3.1.1</ecNumber>
    </recommendedName>
    <alternativeName>
        <fullName evidence="1">Triose-phosphate isomerase</fullName>
    </alternativeName>
</protein>
<reference key="1">
    <citation type="journal article" date="2006" name="Proc. Natl. Acad. Sci. U.S.A.">
        <title>Identification of genes subject to positive selection in uropathogenic strains of Escherichia coli: a comparative genomics approach.</title>
        <authorList>
            <person name="Chen S.L."/>
            <person name="Hung C.-S."/>
            <person name="Xu J."/>
            <person name="Reigstad C.S."/>
            <person name="Magrini V."/>
            <person name="Sabo A."/>
            <person name="Blasiar D."/>
            <person name="Bieri T."/>
            <person name="Meyer R.R."/>
            <person name="Ozersky P."/>
            <person name="Armstrong J.R."/>
            <person name="Fulton R.S."/>
            <person name="Latreille J.P."/>
            <person name="Spieth J."/>
            <person name="Hooton T.M."/>
            <person name="Mardis E.R."/>
            <person name="Hultgren S.J."/>
            <person name="Gordon J.I."/>
        </authorList>
    </citation>
    <scope>NUCLEOTIDE SEQUENCE [LARGE SCALE GENOMIC DNA]</scope>
    <source>
        <strain>UTI89 / UPEC</strain>
    </source>
</reference>
<comment type="function">
    <text evidence="1">Involved in the gluconeogenesis. Catalyzes stereospecifically the conversion of dihydroxyacetone phosphate (DHAP) to D-glyceraldehyde-3-phosphate (G3P).</text>
</comment>
<comment type="catalytic activity">
    <reaction evidence="1">
        <text>D-glyceraldehyde 3-phosphate = dihydroxyacetone phosphate</text>
        <dbReference type="Rhea" id="RHEA:18585"/>
        <dbReference type="ChEBI" id="CHEBI:57642"/>
        <dbReference type="ChEBI" id="CHEBI:59776"/>
        <dbReference type="EC" id="5.3.1.1"/>
    </reaction>
</comment>
<comment type="pathway">
    <text evidence="1">Carbohydrate biosynthesis; gluconeogenesis.</text>
</comment>
<comment type="pathway">
    <text evidence="1">Carbohydrate degradation; glycolysis; D-glyceraldehyde 3-phosphate from glycerone phosphate: step 1/1.</text>
</comment>
<comment type="subunit">
    <text evidence="1">Homodimer.</text>
</comment>
<comment type="subcellular location">
    <subcellularLocation>
        <location evidence="1">Cytoplasm</location>
    </subcellularLocation>
</comment>
<comment type="similarity">
    <text evidence="1">Belongs to the triosephosphate isomerase family.</text>
</comment>
<organism>
    <name type="scientific">Escherichia coli (strain UTI89 / UPEC)</name>
    <dbReference type="NCBI Taxonomy" id="364106"/>
    <lineage>
        <taxon>Bacteria</taxon>
        <taxon>Pseudomonadati</taxon>
        <taxon>Pseudomonadota</taxon>
        <taxon>Gammaproteobacteria</taxon>
        <taxon>Enterobacterales</taxon>
        <taxon>Enterobacteriaceae</taxon>
        <taxon>Escherichia</taxon>
    </lineage>
</organism>
<proteinExistence type="inferred from homology"/>
<keyword id="KW-0963">Cytoplasm</keyword>
<keyword id="KW-0312">Gluconeogenesis</keyword>
<keyword id="KW-0324">Glycolysis</keyword>
<keyword id="KW-0413">Isomerase</keyword>
<accession>Q1R3Z9</accession>
<sequence>MRHPLVMGNWKLNGSRHMVHELVSNLRKELAGVAGCAVAIAPPEMYIDMAKREAEGSHIMLGAQNVDLNLSGAFTGETSAAMLKDIGAQYIIIGHSERRTYHKESDELIAKKFAVLKEQGLTPVLCIGETEAENEAGKTEEVCARQIDAVLKTQGAAAFEGAVIAYEPVWAIGTGKSATPAQAQAVHKFIRDHIAKVDANIAEQVIIQYGGSVNASNAAELFAQPDIDGALVGGASLKADAFAVIVKAAEAAKQA</sequence>
<dbReference type="EC" id="5.3.1.1" evidence="1"/>
<dbReference type="EMBL" id="CP000243">
    <property type="protein sequence ID" value="ABE09915.1"/>
    <property type="molecule type" value="Genomic_DNA"/>
</dbReference>
<dbReference type="RefSeq" id="WP_001216325.1">
    <property type="nucleotide sequence ID" value="NZ_CP064825.1"/>
</dbReference>
<dbReference type="SMR" id="Q1R3Z9"/>
<dbReference type="GeneID" id="93777979"/>
<dbReference type="KEGG" id="eci:UTI89_C4503"/>
<dbReference type="HOGENOM" id="CLU_024251_2_1_6"/>
<dbReference type="UniPathway" id="UPA00109">
    <property type="reaction ID" value="UER00189"/>
</dbReference>
<dbReference type="UniPathway" id="UPA00138"/>
<dbReference type="Proteomes" id="UP000001952">
    <property type="component" value="Chromosome"/>
</dbReference>
<dbReference type="GO" id="GO:0005829">
    <property type="term" value="C:cytosol"/>
    <property type="evidence" value="ECO:0007669"/>
    <property type="project" value="TreeGrafter"/>
</dbReference>
<dbReference type="GO" id="GO:0004807">
    <property type="term" value="F:triose-phosphate isomerase activity"/>
    <property type="evidence" value="ECO:0007669"/>
    <property type="project" value="UniProtKB-UniRule"/>
</dbReference>
<dbReference type="GO" id="GO:0006094">
    <property type="term" value="P:gluconeogenesis"/>
    <property type="evidence" value="ECO:0007669"/>
    <property type="project" value="UniProtKB-UniRule"/>
</dbReference>
<dbReference type="GO" id="GO:0046166">
    <property type="term" value="P:glyceraldehyde-3-phosphate biosynthetic process"/>
    <property type="evidence" value="ECO:0007669"/>
    <property type="project" value="TreeGrafter"/>
</dbReference>
<dbReference type="GO" id="GO:0019563">
    <property type="term" value="P:glycerol catabolic process"/>
    <property type="evidence" value="ECO:0007669"/>
    <property type="project" value="TreeGrafter"/>
</dbReference>
<dbReference type="GO" id="GO:0006096">
    <property type="term" value="P:glycolytic process"/>
    <property type="evidence" value="ECO:0007669"/>
    <property type="project" value="UniProtKB-UniRule"/>
</dbReference>
<dbReference type="CDD" id="cd00311">
    <property type="entry name" value="TIM"/>
    <property type="match status" value="1"/>
</dbReference>
<dbReference type="FunFam" id="3.20.20.70:FF:000020">
    <property type="entry name" value="Triosephosphate isomerase"/>
    <property type="match status" value="1"/>
</dbReference>
<dbReference type="Gene3D" id="3.20.20.70">
    <property type="entry name" value="Aldolase class I"/>
    <property type="match status" value="1"/>
</dbReference>
<dbReference type="HAMAP" id="MF_00147_B">
    <property type="entry name" value="TIM_B"/>
    <property type="match status" value="1"/>
</dbReference>
<dbReference type="InterPro" id="IPR013785">
    <property type="entry name" value="Aldolase_TIM"/>
</dbReference>
<dbReference type="InterPro" id="IPR035990">
    <property type="entry name" value="TIM_sf"/>
</dbReference>
<dbReference type="InterPro" id="IPR022896">
    <property type="entry name" value="TrioseP_Isoase_bac/euk"/>
</dbReference>
<dbReference type="InterPro" id="IPR000652">
    <property type="entry name" value="Triosephosphate_isomerase"/>
</dbReference>
<dbReference type="InterPro" id="IPR020861">
    <property type="entry name" value="Triosephosphate_isomerase_AS"/>
</dbReference>
<dbReference type="NCBIfam" id="TIGR00419">
    <property type="entry name" value="tim"/>
    <property type="match status" value="1"/>
</dbReference>
<dbReference type="PANTHER" id="PTHR21139">
    <property type="entry name" value="TRIOSEPHOSPHATE ISOMERASE"/>
    <property type="match status" value="1"/>
</dbReference>
<dbReference type="PANTHER" id="PTHR21139:SF42">
    <property type="entry name" value="TRIOSEPHOSPHATE ISOMERASE"/>
    <property type="match status" value="1"/>
</dbReference>
<dbReference type="Pfam" id="PF00121">
    <property type="entry name" value="TIM"/>
    <property type="match status" value="1"/>
</dbReference>
<dbReference type="SUPFAM" id="SSF51351">
    <property type="entry name" value="Triosephosphate isomerase (TIM)"/>
    <property type="match status" value="1"/>
</dbReference>
<dbReference type="PROSITE" id="PS00171">
    <property type="entry name" value="TIM_1"/>
    <property type="match status" value="1"/>
</dbReference>
<dbReference type="PROSITE" id="PS51440">
    <property type="entry name" value="TIM_2"/>
    <property type="match status" value="1"/>
</dbReference>
<evidence type="ECO:0000255" key="1">
    <source>
        <dbReference type="HAMAP-Rule" id="MF_00147"/>
    </source>
</evidence>
<gene>
    <name evidence="1" type="primary">tpiA</name>
    <name type="ordered locus">UTI89_C4503</name>
</gene>
<feature type="chain" id="PRO_0000307462" description="Triosephosphate isomerase">
    <location>
        <begin position="1"/>
        <end position="255"/>
    </location>
</feature>
<feature type="active site" description="Electrophile" evidence="1">
    <location>
        <position position="95"/>
    </location>
</feature>
<feature type="active site" description="Proton acceptor" evidence="1">
    <location>
        <position position="167"/>
    </location>
</feature>
<feature type="binding site" evidence="1">
    <location>
        <begin position="9"/>
        <end position="11"/>
    </location>
    <ligand>
        <name>substrate</name>
    </ligand>
</feature>
<feature type="binding site" evidence="1">
    <location>
        <position position="173"/>
    </location>
    <ligand>
        <name>substrate</name>
    </ligand>
</feature>
<feature type="binding site" evidence="1">
    <location>
        <position position="212"/>
    </location>
    <ligand>
        <name>substrate</name>
    </ligand>
</feature>
<feature type="binding site" evidence="1">
    <location>
        <begin position="233"/>
        <end position="234"/>
    </location>
    <ligand>
        <name>substrate</name>
    </ligand>
</feature>